<gene>
    <name evidence="1" type="primary">rsmG</name>
    <name type="ordered locus">sce6057</name>
</gene>
<feature type="chain" id="PRO_0000335430" description="Ribosomal RNA small subunit methyltransferase G">
    <location>
        <begin position="1"/>
        <end position="239"/>
    </location>
</feature>
<feature type="binding site" evidence="1">
    <location>
        <position position="95"/>
    </location>
    <ligand>
        <name>S-adenosyl-L-methionine</name>
        <dbReference type="ChEBI" id="CHEBI:59789"/>
    </ligand>
</feature>
<feature type="binding site" evidence="1">
    <location>
        <position position="100"/>
    </location>
    <ligand>
        <name>S-adenosyl-L-methionine</name>
        <dbReference type="ChEBI" id="CHEBI:59789"/>
    </ligand>
</feature>
<feature type="binding site" evidence="1">
    <location>
        <begin position="118"/>
        <end position="120"/>
    </location>
    <ligand>
        <name>S-adenosyl-L-methionine</name>
        <dbReference type="ChEBI" id="CHEBI:59789"/>
    </ligand>
</feature>
<feature type="binding site" evidence="1">
    <location>
        <begin position="146"/>
        <end position="147"/>
    </location>
    <ligand>
        <name>S-adenosyl-L-methionine</name>
        <dbReference type="ChEBI" id="CHEBI:59789"/>
    </ligand>
</feature>
<feature type="binding site" evidence="1">
    <location>
        <position position="164"/>
    </location>
    <ligand>
        <name>S-adenosyl-L-methionine</name>
        <dbReference type="ChEBI" id="CHEBI:59789"/>
    </ligand>
</feature>
<dbReference type="EC" id="2.1.1.170" evidence="1"/>
<dbReference type="EMBL" id="AM746676">
    <property type="protein sequence ID" value="CAN96221.1"/>
    <property type="molecule type" value="Genomic_DNA"/>
</dbReference>
<dbReference type="RefSeq" id="WP_012238686.1">
    <property type="nucleotide sequence ID" value="NC_010162.1"/>
</dbReference>
<dbReference type="SMR" id="A9GCQ1"/>
<dbReference type="STRING" id="448385.sce6057"/>
<dbReference type="KEGG" id="scl:sce6057"/>
<dbReference type="eggNOG" id="COG0357">
    <property type="taxonomic scope" value="Bacteria"/>
</dbReference>
<dbReference type="HOGENOM" id="CLU_065341_0_0_7"/>
<dbReference type="OrthoDB" id="9808773at2"/>
<dbReference type="BioCyc" id="SCEL448385:SCE_RS31105-MONOMER"/>
<dbReference type="Proteomes" id="UP000002139">
    <property type="component" value="Chromosome"/>
</dbReference>
<dbReference type="GO" id="GO:0005829">
    <property type="term" value="C:cytosol"/>
    <property type="evidence" value="ECO:0007669"/>
    <property type="project" value="TreeGrafter"/>
</dbReference>
<dbReference type="GO" id="GO:0070043">
    <property type="term" value="F:rRNA (guanine-N7-)-methyltransferase activity"/>
    <property type="evidence" value="ECO:0007669"/>
    <property type="project" value="UniProtKB-UniRule"/>
</dbReference>
<dbReference type="Gene3D" id="3.40.50.150">
    <property type="entry name" value="Vaccinia Virus protein VP39"/>
    <property type="match status" value="1"/>
</dbReference>
<dbReference type="HAMAP" id="MF_00074">
    <property type="entry name" value="16SrRNA_methyltr_G"/>
    <property type="match status" value="1"/>
</dbReference>
<dbReference type="InterPro" id="IPR003682">
    <property type="entry name" value="rRNA_ssu_MeTfrase_G"/>
</dbReference>
<dbReference type="InterPro" id="IPR029063">
    <property type="entry name" value="SAM-dependent_MTases_sf"/>
</dbReference>
<dbReference type="NCBIfam" id="TIGR00138">
    <property type="entry name" value="rsmG_gidB"/>
    <property type="match status" value="1"/>
</dbReference>
<dbReference type="PANTHER" id="PTHR31760">
    <property type="entry name" value="S-ADENOSYL-L-METHIONINE-DEPENDENT METHYLTRANSFERASES SUPERFAMILY PROTEIN"/>
    <property type="match status" value="1"/>
</dbReference>
<dbReference type="PANTHER" id="PTHR31760:SF0">
    <property type="entry name" value="S-ADENOSYL-L-METHIONINE-DEPENDENT METHYLTRANSFERASES SUPERFAMILY PROTEIN"/>
    <property type="match status" value="1"/>
</dbReference>
<dbReference type="Pfam" id="PF02527">
    <property type="entry name" value="GidB"/>
    <property type="match status" value="1"/>
</dbReference>
<dbReference type="PIRSF" id="PIRSF003078">
    <property type="entry name" value="GidB"/>
    <property type="match status" value="1"/>
</dbReference>
<dbReference type="SUPFAM" id="SSF53335">
    <property type="entry name" value="S-adenosyl-L-methionine-dependent methyltransferases"/>
    <property type="match status" value="1"/>
</dbReference>
<comment type="function">
    <text evidence="1">Specifically methylates the N7 position of guanine in position 527 of 16S rRNA.</text>
</comment>
<comment type="catalytic activity">
    <reaction evidence="1">
        <text>guanosine(527) in 16S rRNA + S-adenosyl-L-methionine = N(7)-methylguanosine(527) in 16S rRNA + S-adenosyl-L-homocysteine</text>
        <dbReference type="Rhea" id="RHEA:42732"/>
        <dbReference type="Rhea" id="RHEA-COMP:10209"/>
        <dbReference type="Rhea" id="RHEA-COMP:10210"/>
        <dbReference type="ChEBI" id="CHEBI:57856"/>
        <dbReference type="ChEBI" id="CHEBI:59789"/>
        <dbReference type="ChEBI" id="CHEBI:74269"/>
        <dbReference type="ChEBI" id="CHEBI:74480"/>
        <dbReference type="EC" id="2.1.1.170"/>
    </reaction>
</comment>
<comment type="subcellular location">
    <subcellularLocation>
        <location evidence="1">Cytoplasm</location>
    </subcellularLocation>
</comment>
<comment type="similarity">
    <text evidence="1">Belongs to the methyltransferase superfamily. RNA methyltransferase RsmG family.</text>
</comment>
<proteinExistence type="inferred from homology"/>
<keyword id="KW-0963">Cytoplasm</keyword>
<keyword id="KW-0489">Methyltransferase</keyword>
<keyword id="KW-1185">Reference proteome</keyword>
<keyword id="KW-0698">rRNA processing</keyword>
<keyword id="KW-0949">S-adenosyl-L-methionine</keyword>
<keyword id="KW-0808">Transferase</keyword>
<name>RSMG_SORC5</name>
<organism>
    <name type="scientific">Sorangium cellulosum (strain So ce56)</name>
    <name type="common">Polyangium cellulosum (strain So ce56)</name>
    <dbReference type="NCBI Taxonomy" id="448385"/>
    <lineage>
        <taxon>Bacteria</taxon>
        <taxon>Pseudomonadati</taxon>
        <taxon>Myxococcota</taxon>
        <taxon>Polyangia</taxon>
        <taxon>Polyangiales</taxon>
        <taxon>Polyangiaceae</taxon>
        <taxon>Sorangium</taxon>
    </lineage>
</organism>
<accession>A9GCQ1</accession>
<reference key="1">
    <citation type="journal article" date="2007" name="Nat. Biotechnol.">
        <title>Complete genome sequence of the myxobacterium Sorangium cellulosum.</title>
        <authorList>
            <person name="Schneiker S."/>
            <person name="Perlova O."/>
            <person name="Kaiser O."/>
            <person name="Gerth K."/>
            <person name="Alici A."/>
            <person name="Altmeyer M.O."/>
            <person name="Bartels D."/>
            <person name="Bekel T."/>
            <person name="Beyer S."/>
            <person name="Bode E."/>
            <person name="Bode H.B."/>
            <person name="Bolten C.J."/>
            <person name="Choudhuri J.V."/>
            <person name="Doss S."/>
            <person name="Elnakady Y.A."/>
            <person name="Frank B."/>
            <person name="Gaigalat L."/>
            <person name="Goesmann A."/>
            <person name="Groeger C."/>
            <person name="Gross F."/>
            <person name="Jelsbak L."/>
            <person name="Jelsbak L."/>
            <person name="Kalinowski J."/>
            <person name="Kegler C."/>
            <person name="Knauber T."/>
            <person name="Konietzny S."/>
            <person name="Kopp M."/>
            <person name="Krause L."/>
            <person name="Krug D."/>
            <person name="Linke B."/>
            <person name="Mahmud T."/>
            <person name="Martinez-Arias R."/>
            <person name="McHardy A.C."/>
            <person name="Merai M."/>
            <person name="Meyer F."/>
            <person name="Mormann S."/>
            <person name="Munoz-Dorado J."/>
            <person name="Perez J."/>
            <person name="Pradella S."/>
            <person name="Rachid S."/>
            <person name="Raddatz G."/>
            <person name="Rosenau F."/>
            <person name="Rueckert C."/>
            <person name="Sasse F."/>
            <person name="Scharfe M."/>
            <person name="Schuster S.C."/>
            <person name="Suen G."/>
            <person name="Treuner-Lange A."/>
            <person name="Velicer G.J."/>
            <person name="Vorholter F.-J."/>
            <person name="Weissman K.J."/>
            <person name="Welch R.D."/>
            <person name="Wenzel S.C."/>
            <person name="Whitworth D.E."/>
            <person name="Wilhelm S."/>
            <person name="Wittmann C."/>
            <person name="Bloecker H."/>
            <person name="Puehler A."/>
            <person name="Mueller R."/>
        </authorList>
    </citation>
    <scope>NUCLEOTIDE SEQUENCE [LARGE SCALE GENOMIC DNA]</scope>
    <source>
        <strain>So ce56</strain>
    </source>
</reference>
<sequence length="239" mass="25175">MPPDERAPLPLPAPAPLTPPEGFAERLAAIGVTLDAAVIAKLGDYLARLLAMNELMNLTSITDPVEVWEKHVLDSLTLLPLLEELSAGARLADIGSGGGLPGLPLAIARPDLKVTLVEATQKKASFLVAVAAGLGLTNVSVRAERAEQLGKGDLCGAFDAVTARAVGRLVMLIPLTVPFVRPSGLVLLVKGQRAEEELAEASWVLGRQRAAFVKTVATPTGKIVMLRKSGEEPKRHPGR</sequence>
<evidence type="ECO:0000255" key="1">
    <source>
        <dbReference type="HAMAP-Rule" id="MF_00074"/>
    </source>
</evidence>
<protein>
    <recommendedName>
        <fullName evidence="1">Ribosomal RNA small subunit methyltransferase G</fullName>
        <ecNumber evidence="1">2.1.1.170</ecNumber>
    </recommendedName>
    <alternativeName>
        <fullName evidence="1">16S rRNA 7-methylguanosine methyltransferase</fullName>
        <shortName evidence="1">16S rRNA m7G methyltransferase</shortName>
    </alternativeName>
</protein>